<evidence type="ECO:0000305" key="1"/>
<evidence type="ECO:0007829" key="2">
    <source>
        <dbReference type="PDB" id="1FJJ"/>
    </source>
</evidence>
<comment type="subunit">
    <text>Homodimer.</text>
</comment>
<comment type="subcellular location">
    <subcellularLocation>
        <location>Cytoplasm</location>
    </subcellularLocation>
</comment>
<comment type="similarity">
    <text evidence="1">Belongs to the UPF0098 family.</text>
</comment>
<dbReference type="EMBL" id="J04423">
    <property type="protein sequence ID" value="AAA23513.1"/>
    <property type="molecule type" value="Genomic_DNA"/>
</dbReference>
<dbReference type="EMBL" id="U00096">
    <property type="protein sequence ID" value="AAC73860.1"/>
    <property type="molecule type" value="Genomic_DNA"/>
</dbReference>
<dbReference type="EMBL" id="AP009048">
    <property type="protein sequence ID" value="BAE76360.1"/>
    <property type="molecule type" value="Genomic_DNA"/>
</dbReference>
<dbReference type="PIR" id="E64813">
    <property type="entry name" value="Q3ECBA"/>
</dbReference>
<dbReference type="RefSeq" id="NP_415294.1">
    <property type="nucleotide sequence ID" value="NC_000913.3"/>
</dbReference>
<dbReference type="RefSeq" id="WP_000767389.1">
    <property type="nucleotide sequence ID" value="NZ_STEB01000028.1"/>
</dbReference>
<dbReference type="PDB" id="1FJJ">
    <property type="method" value="X-ray"/>
    <property type="resolution" value="1.66 A"/>
    <property type="chains" value="A=1-158"/>
</dbReference>
<dbReference type="PDB" id="1VI3">
    <property type="method" value="X-ray"/>
    <property type="resolution" value="1.76 A"/>
    <property type="chains" value="A=2-158"/>
</dbReference>
<dbReference type="PDBsum" id="1FJJ"/>
<dbReference type="PDBsum" id="1VI3"/>
<dbReference type="SMR" id="P12994"/>
<dbReference type="BioGRID" id="4261840">
    <property type="interactions" value="32"/>
</dbReference>
<dbReference type="FunCoup" id="P12994">
    <property type="interactions" value="101"/>
</dbReference>
<dbReference type="IntAct" id="P12994">
    <property type="interactions" value="6"/>
</dbReference>
<dbReference type="STRING" id="511145.b0773"/>
<dbReference type="jPOST" id="P12994"/>
<dbReference type="PaxDb" id="511145-b0773"/>
<dbReference type="EnsemblBacteria" id="AAC73860">
    <property type="protein sequence ID" value="AAC73860"/>
    <property type="gene ID" value="b0773"/>
</dbReference>
<dbReference type="GeneID" id="945383"/>
<dbReference type="KEGG" id="ecj:JW0756"/>
<dbReference type="KEGG" id="eco:b0773"/>
<dbReference type="KEGG" id="ecoc:C3026_04915"/>
<dbReference type="PATRIC" id="fig|1411691.4.peg.1505"/>
<dbReference type="EchoBASE" id="EB1220"/>
<dbReference type="eggNOG" id="COG1881">
    <property type="taxonomic scope" value="Bacteria"/>
</dbReference>
<dbReference type="HOGENOM" id="CLU_083918_2_0_6"/>
<dbReference type="InParanoid" id="P12994"/>
<dbReference type="OMA" id="HWAVANI"/>
<dbReference type="OrthoDB" id="9797506at2"/>
<dbReference type="PhylomeDB" id="P12994"/>
<dbReference type="BioCyc" id="EcoCyc:EG11238-MONOMER"/>
<dbReference type="EvolutionaryTrace" id="P12994"/>
<dbReference type="PRO" id="PR:P12994"/>
<dbReference type="Proteomes" id="UP000000625">
    <property type="component" value="Chromosome"/>
</dbReference>
<dbReference type="GO" id="GO:0005737">
    <property type="term" value="C:cytoplasm"/>
    <property type="evidence" value="ECO:0007669"/>
    <property type="project" value="UniProtKB-SubCell"/>
</dbReference>
<dbReference type="CDD" id="cd00865">
    <property type="entry name" value="PEBP_bact_arch"/>
    <property type="match status" value="1"/>
</dbReference>
<dbReference type="Gene3D" id="3.90.280.10">
    <property type="entry name" value="PEBP-like"/>
    <property type="match status" value="1"/>
</dbReference>
<dbReference type="InterPro" id="IPR008914">
    <property type="entry name" value="PEBP"/>
</dbReference>
<dbReference type="InterPro" id="IPR036610">
    <property type="entry name" value="PEBP-like_sf"/>
</dbReference>
<dbReference type="InterPro" id="IPR005247">
    <property type="entry name" value="YbhB_YbcL/LppC-like"/>
</dbReference>
<dbReference type="NCBIfam" id="NF007609">
    <property type="entry name" value="PRK10257.1"/>
    <property type="match status" value="1"/>
</dbReference>
<dbReference type="NCBIfam" id="TIGR00481">
    <property type="entry name" value="YbhB/YbcL family Raf kinase inhibitor-like protein"/>
    <property type="match status" value="1"/>
</dbReference>
<dbReference type="PANTHER" id="PTHR30289">
    <property type="entry name" value="UNCHARACTERIZED PROTEIN YBCL-RELATED"/>
    <property type="match status" value="1"/>
</dbReference>
<dbReference type="PANTHER" id="PTHR30289:SF12">
    <property type="entry name" value="UPF0098 PROTEIN YBHB"/>
    <property type="match status" value="1"/>
</dbReference>
<dbReference type="Pfam" id="PF01161">
    <property type="entry name" value="PBP"/>
    <property type="match status" value="1"/>
</dbReference>
<dbReference type="SUPFAM" id="SSF49777">
    <property type="entry name" value="PEBP-like"/>
    <property type="match status" value="1"/>
</dbReference>
<feature type="chain" id="PRO_0000137900" description="UPF0098 protein YbhB">
    <location>
        <begin position="1"/>
        <end position="158"/>
    </location>
</feature>
<feature type="sequence conflict" description="In Ref. 1; AAA23513." evidence="1" ref="1">
    <original>G</original>
    <variation>A</variation>
    <location>
        <position position="136"/>
    </location>
</feature>
<feature type="strand" evidence="2">
    <location>
        <begin position="2"/>
        <end position="4"/>
    </location>
</feature>
<feature type="helix" evidence="2">
    <location>
        <begin position="16"/>
        <end position="18"/>
    </location>
</feature>
<feature type="strand" evidence="2">
    <location>
        <begin position="34"/>
        <end position="37"/>
    </location>
</feature>
<feature type="strand" evidence="2">
    <location>
        <begin position="45"/>
        <end position="52"/>
    </location>
</feature>
<feature type="turn" evidence="2">
    <location>
        <begin position="56"/>
        <end position="59"/>
    </location>
</feature>
<feature type="strand" evidence="2">
    <location>
        <begin position="61"/>
        <end position="70"/>
    </location>
</feature>
<feature type="helix" evidence="2">
    <location>
        <begin position="80"/>
        <end position="82"/>
    </location>
</feature>
<feature type="strand" evidence="2">
    <location>
        <begin position="99"/>
        <end position="102"/>
    </location>
</feature>
<feature type="strand" evidence="2">
    <location>
        <begin position="114"/>
        <end position="126"/>
    </location>
</feature>
<feature type="helix" evidence="2">
    <location>
        <begin position="136"/>
        <end position="146"/>
    </location>
</feature>
<feature type="strand" evidence="2">
    <location>
        <begin position="147"/>
        <end position="157"/>
    </location>
</feature>
<proteinExistence type="evidence at protein level"/>
<reference key="1">
    <citation type="journal article" date="1988" name="J. Biol. Chem.">
        <title>The Escherichia coli biotin biosynthetic enzyme sequences predicted from the nucleotide sequence of the bio operon.</title>
        <authorList>
            <person name="Otsuka A.J."/>
            <person name="Buoncristiani M.R."/>
            <person name="Howard P.K."/>
            <person name="Flamm J."/>
            <person name="Johnson O."/>
            <person name="Yamamoto R."/>
            <person name="Uchida K."/>
            <person name="Cook C."/>
            <person name="Ruppert J."/>
            <person name="Matsuzaki J."/>
        </authorList>
    </citation>
    <scope>NUCLEOTIDE SEQUENCE [GENOMIC DNA]</scope>
</reference>
<reference key="2">
    <citation type="journal article" date="1997" name="Science">
        <title>The complete genome sequence of Escherichia coli K-12.</title>
        <authorList>
            <person name="Blattner F.R."/>
            <person name="Plunkett G. III"/>
            <person name="Bloch C.A."/>
            <person name="Perna N.T."/>
            <person name="Burland V."/>
            <person name="Riley M."/>
            <person name="Collado-Vides J."/>
            <person name="Glasner J.D."/>
            <person name="Rode C.K."/>
            <person name="Mayhew G.F."/>
            <person name="Gregor J."/>
            <person name="Davis N.W."/>
            <person name="Kirkpatrick H.A."/>
            <person name="Goeden M.A."/>
            <person name="Rose D.J."/>
            <person name="Mau B."/>
            <person name="Shao Y."/>
        </authorList>
    </citation>
    <scope>NUCLEOTIDE SEQUENCE [LARGE SCALE GENOMIC DNA]</scope>
    <source>
        <strain>K12 / MG1655 / ATCC 47076</strain>
    </source>
</reference>
<reference key="3">
    <citation type="journal article" date="2006" name="Mol. Syst. Biol.">
        <title>Highly accurate genome sequences of Escherichia coli K-12 strains MG1655 and W3110.</title>
        <authorList>
            <person name="Hayashi K."/>
            <person name="Morooka N."/>
            <person name="Yamamoto Y."/>
            <person name="Fujita K."/>
            <person name="Isono K."/>
            <person name="Choi S."/>
            <person name="Ohtsubo E."/>
            <person name="Baba T."/>
            <person name="Wanner B.L."/>
            <person name="Mori H."/>
            <person name="Horiuchi T."/>
        </authorList>
    </citation>
    <scope>NUCLEOTIDE SEQUENCE [LARGE SCALE GENOMIC DNA]</scope>
    <source>
        <strain>K12 / W3110 / ATCC 27325 / DSM 5911</strain>
    </source>
</reference>
<reference key="4">
    <citation type="journal article" date="2001" name="J. Mol. Biol.">
        <title>Crystal structures of YBHB and YBCL from Escherichia coli, two bacterial homologues to a Raf kinase inhibitor protein.</title>
        <authorList>
            <person name="Serre L."/>
            <person name="Pereira de Jesus K."/>
            <person name="Zelwer C."/>
            <person name="Bureaud N."/>
            <person name="Schoentgen F."/>
            <person name="Benedetti H."/>
        </authorList>
    </citation>
    <scope>X-RAY CRYSTALLOGRAPHY (1.66 ANGSTROMS)</scope>
    <scope>CHARACTERIZATION</scope>
</reference>
<sequence length="158" mass="17085">MKLISNDLRDGDKLPHRHVFNGMGYDGDNISPHLAWDDVPAGTKSFVVTCYDPDAPTGSGWWHWVVVNLPADTRVLPQGFGSGLVAMPDGVLQTRTDFGKTGYDGAAPPKGETHRYIFTVHALDIERIDVDEGASGAMVGFNVHFHSLASASITAMFS</sequence>
<accession>P12994</accession>
<accession>P75766</accession>
<accession>Q2MBJ6</accession>
<gene>
    <name type="primary">ybhB</name>
    <name type="ordered locus">b0773</name>
    <name type="ordered locus">JW0756</name>
</gene>
<protein>
    <recommendedName>
        <fullName>UPF0098 protein YbhB</fullName>
    </recommendedName>
</protein>
<name>YBHB_ECOLI</name>
<keyword id="KW-0002">3D-structure</keyword>
<keyword id="KW-0963">Cytoplasm</keyword>
<keyword id="KW-1185">Reference proteome</keyword>
<organism>
    <name type="scientific">Escherichia coli (strain K12)</name>
    <dbReference type="NCBI Taxonomy" id="83333"/>
    <lineage>
        <taxon>Bacteria</taxon>
        <taxon>Pseudomonadati</taxon>
        <taxon>Pseudomonadota</taxon>
        <taxon>Gammaproteobacteria</taxon>
        <taxon>Enterobacterales</taxon>
        <taxon>Enterobacteriaceae</taxon>
        <taxon>Escherichia</taxon>
    </lineage>
</organism>